<accession>A6ZQH4</accession>
<name>CIS3_YEAS7</name>
<keyword id="KW-0134">Cell wall</keyword>
<keyword id="KW-0961">Cell wall biogenesis/degradation</keyword>
<keyword id="KW-0165">Cleavage on pair of basic residues</keyword>
<keyword id="KW-0325">Glycoprotein</keyword>
<keyword id="KW-0677">Repeat</keyword>
<keyword id="KW-0964">Secreted</keyword>
<keyword id="KW-0732">Signal</keyword>
<feature type="signal peptide" evidence="1">
    <location>
        <begin position="1"/>
        <end position="21"/>
    </location>
</feature>
<feature type="propeptide" id="PRO_0000377612" evidence="1">
    <location>
        <begin position="22"/>
        <end position="64"/>
    </location>
</feature>
<feature type="chain" id="PRO_0000377613" description="Cell wall mannoprotein CIS3">
    <location>
        <begin position="65"/>
        <end position="225"/>
    </location>
</feature>
<feature type="repeat" description="PIR1/2/3">
    <location>
        <begin position="65"/>
        <end position="82"/>
    </location>
</feature>
<feature type="region of interest" description="Disordered" evidence="2">
    <location>
        <begin position="78"/>
        <end position="128"/>
    </location>
</feature>
<feature type="compositionally biased region" description="Polar residues" evidence="2">
    <location>
        <begin position="78"/>
        <end position="92"/>
    </location>
</feature>
<feature type="compositionally biased region" description="Low complexity" evidence="2">
    <location>
        <begin position="93"/>
        <end position="122"/>
    </location>
</feature>
<feature type="site" description="Cleavage; by KEX2" evidence="1">
    <location>
        <begin position="64"/>
        <end position="65"/>
    </location>
</feature>
<feature type="site" description="Covalent attachment to cell wall glycan" evidence="1">
    <location>
        <position position="74"/>
    </location>
</feature>
<feature type="glycosylation site" description="O-linked (Man) serine" evidence="1">
    <location>
        <position position="68"/>
    </location>
</feature>
<feature type="glycosylation site" description="O-linked (Man) threonine" evidence="1">
    <location>
        <position position="78"/>
    </location>
</feature>
<feature type="glycosylation site" description="O-linked (Man) serine" evidence="1">
    <location>
        <position position="102"/>
    </location>
</feature>
<feature type="glycosylation site" description="O-linked (Man) serine" evidence="1">
    <location>
        <position position="103"/>
    </location>
</feature>
<feature type="glycosylation site" description="O-linked (Man) serine" evidence="1">
    <location>
        <position position="104"/>
    </location>
</feature>
<feature type="glycosylation site" description="O-linked (Man) serine" evidence="1">
    <location>
        <position position="106"/>
    </location>
</feature>
<feature type="glycosylation site" description="O-linked (Man) threonine" evidence="1">
    <location>
        <position position="108"/>
    </location>
</feature>
<feature type="glycosylation site" description="O-linked (Man) serine" evidence="1">
    <location>
        <position position="109"/>
    </location>
</feature>
<feature type="glycosylation site" description="O-linked (Man) threonine" evidence="1">
    <location>
        <position position="111"/>
    </location>
</feature>
<feature type="glycosylation site" description="O-linked (Man) threonine" evidence="1">
    <location>
        <position position="114"/>
    </location>
</feature>
<feature type="glycosylation site" description="O-linked (Man) serine" evidence="1">
    <location>
        <position position="115"/>
    </location>
</feature>
<feature type="glycosylation site" description="O-linked (Man) serine" evidence="1">
    <location>
        <position position="116"/>
    </location>
</feature>
<gene>
    <name type="primary">CIS3</name>
    <name type="ORF">SCY_3135</name>
</gene>
<sequence length="225" mass="23028">MQFKNVALAASVAALSATASAEGYTPGEPWSTLTPTGSISCGAAEYTTTFGIAVQAITSSKAKRDVISQIGDGQVQATSAAATDSQVQASSTATPTSSEKISSSASKTSSTNATSSSCATPSLKDSSCKNSGTLELTLKDGVLTDAKGRIGSIVANRQFQFDGPPPQAGAIYAAGWSITEDGYLALGDSDVFYQCLSGNFYNLYDQNVAEQCSAIHLEAVSLVDC</sequence>
<reference key="1">
    <citation type="journal article" date="2007" name="Proc. Natl. Acad. Sci. U.S.A.">
        <title>Genome sequencing and comparative analysis of Saccharomyces cerevisiae strain YJM789.</title>
        <authorList>
            <person name="Wei W."/>
            <person name="McCusker J.H."/>
            <person name="Hyman R.W."/>
            <person name="Jones T."/>
            <person name="Ning Y."/>
            <person name="Cao Z."/>
            <person name="Gu Z."/>
            <person name="Bruno D."/>
            <person name="Miranda M."/>
            <person name="Nguyen M."/>
            <person name="Wilhelmy J."/>
            <person name="Komp C."/>
            <person name="Tamse R."/>
            <person name="Wang X."/>
            <person name="Jia P."/>
            <person name="Luedi P."/>
            <person name="Oefner P.J."/>
            <person name="David L."/>
            <person name="Dietrich F.S."/>
            <person name="Li Y."/>
            <person name="Davis R.W."/>
            <person name="Steinmetz L.M."/>
        </authorList>
    </citation>
    <scope>NUCLEOTIDE SEQUENCE [LARGE SCALE GENOMIC DNA]</scope>
    <source>
        <strain>YJM789</strain>
    </source>
</reference>
<organism>
    <name type="scientific">Saccharomyces cerevisiae (strain YJM789)</name>
    <name type="common">Baker's yeast</name>
    <dbReference type="NCBI Taxonomy" id="307796"/>
    <lineage>
        <taxon>Eukaryota</taxon>
        <taxon>Fungi</taxon>
        <taxon>Dikarya</taxon>
        <taxon>Ascomycota</taxon>
        <taxon>Saccharomycotina</taxon>
        <taxon>Saccharomycetes</taxon>
        <taxon>Saccharomycetales</taxon>
        <taxon>Saccharomycetaceae</taxon>
        <taxon>Saccharomyces</taxon>
    </lineage>
</organism>
<protein>
    <recommendedName>
        <fullName>Cell wall mannoprotein CIS3</fullName>
    </recommendedName>
    <alternativeName>
        <fullName>Covalently-linked cell wall protein 5/11</fullName>
    </alternativeName>
    <alternativeName>
        <fullName>Protein with internal repeats 4</fullName>
    </alternativeName>
    <alternativeName>
        <fullName>Soluble cell wall protein 8</fullName>
    </alternativeName>
</protein>
<proteinExistence type="inferred from homology"/>
<dbReference type="EMBL" id="AAFW02000044">
    <property type="protein sequence ID" value="EDN63226.1"/>
    <property type="molecule type" value="Genomic_DNA"/>
</dbReference>
<dbReference type="GlyCosmos" id="A6ZQH4">
    <property type="glycosylation" value="12 sites, No reported glycans"/>
</dbReference>
<dbReference type="HOGENOM" id="CLU_039662_2_0_1"/>
<dbReference type="Proteomes" id="UP000007060">
    <property type="component" value="Unassembled WGS sequence"/>
</dbReference>
<dbReference type="GO" id="GO:0005576">
    <property type="term" value="C:extracellular region"/>
    <property type="evidence" value="ECO:0007669"/>
    <property type="project" value="UniProtKB-KW"/>
</dbReference>
<dbReference type="GO" id="GO:0009277">
    <property type="term" value="C:fungal-type cell wall"/>
    <property type="evidence" value="ECO:0007669"/>
    <property type="project" value="TreeGrafter"/>
</dbReference>
<dbReference type="GO" id="GO:0005199">
    <property type="term" value="F:structural constituent of cell wall"/>
    <property type="evidence" value="ECO:0007669"/>
    <property type="project" value="InterPro"/>
</dbReference>
<dbReference type="GO" id="GO:0031505">
    <property type="term" value="P:fungal-type cell wall organization"/>
    <property type="evidence" value="ECO:0007669"/>
    <property type="project" value="UniProtKB-ARBA"/>
</dbReference>
<dbReference type="InterPro" id="IPR054508">
    <property type="entry name" value="PIR1-like_C"/>
</dbReference>
<dbReference type="InterPro" id="IPR051153">
    <property type="entry name" value="Yeast_CWMannoprotein_PIR"/>
</dbReference>
<dbReference type="InterPro" id="IPR000420">
    <property type="entry name" value="Yeast_PIR_rpt"/>
</dbReference>
<dbReference type="PANTHER" id="PTHR47254">
    <property type="entry name" value="CELL WALL MANNOPROTEIN CIS3-RELATED"/>
    <property type="match status" value="1"/>
</dbReference>
<dbReference type="PANTHER" id="PTHR47254:SF1">
    <property type="entry name" value="CELL WALL MANNOPROTEIN CIS3-RELATED"/>
    <property type="match status" value="1"/>
</dbReference>
<dbReference type="Pfam" id="PF00399">
    <property type="entry name" value="PIR"/>
    <property type="match status" value="1"/>
</dbReference>
<dbReference type="Pfam" id="PF22799">
    <property type="entry name" value="PIR1-like_C"/>
    <property type="match status" value="1"/>
</dbReference>
<dbReference type="PROSITE" id="PS00929">
    <property type="entry name" value="PIR_REPEAT_1"/>
    <property type="match status" value="1"/>
</dbReference>
<dbReference type="PROSITE" id="PS50256">
    <property type="entry name" value="PIR_REPEAT_2"/>
    <property type="match status" value="1"/>
</dbReference>
<evidence type="ECO:0000250" key="1"/>
<evidence type="ECO:0000256" key="2">
    <source>
        <dbReference type="SAM" id="MobiDB-lite"/>
    </source>
</evidence>
<evidence type="ECO:0000305" key="3"/>
<comment type="function">
    <text evidence="1">Component of the outer cell wall layer. Required for stability of the cell wall and for optimal growth. Required for resistance against several antifungal and cell wall-perturbing agents (By similarity).</text>
</comment>
<comment type="subcellular location">
    <subcellularLocation>
        <location evidence="1">Secreted</location>
        <location evidence="1">Cell wall</location>
    </subcellularLocation>
    <text evidence="1">Covalently attached to the cell wall. Localizes predominantly on the surface of growing buds (By similarity).</text>
</comment>
<comment type="domain">
    <text evidence="1">The PIR1/2/3 repeat is required for the covalent linkage to the cell wall.</text>
</comment>
<comment type="PTM">
    <text evidence="1">Covalently linked to beta-1,3-glucan of the inner cell wall layer via an alkali-sensitive ester linkage between the gamma-carboxyl group of glutamic acid, arising from Gln-74 within the PIR1/2/3 repeat, and hydroxyl groups of glucoses of beta-1,3-glucan chains.</text>
</comment>
<comment type="PTM">
    <text evidence="1">Extensively O-mannosylated.</text>
</comment>
<comment type="similarity">
    <text evidence="3">Belongs to the PIR protein family.</text>
</comment>